<dbReference type="EC" id="5.6.1.7" evidence="1"/>
<dbReference type="EMBL" id="CP001029">
    <property type="protein sequence ID" value="ACB83418.1"/>
    <property type="molecule type" value="Genomic_DNA"/>
</dbReference>
<dbReference type="RefSeq" id="WP_012457014.1">
    <property type="nucleotide sequence ID" value="NC_010725.1"/>
</dbReference>
<dbReference type="SMR" id="B1ZAU5"/>
<dbReference type="STRING" id="441620.Mpop_5325"/>
<dbReference type="KEGG" id="mpo:Mpop_5325"/>
<dbReference type="eggNOG" id="COG0459">
    <property type="taxonomic scope" value="Bacteria"/>
</dbReference>
<dbReference type="HOGENOM" id="CLU_016503_3_0_5"/>
<dbReference type="OrthoDB" id="9766614at2"/>
<dbReference type="Proteomes" id="UP000007136">
    <property type="component" value="Chromosome"/>
</dbReference>
<dbReference type="GO" id="GO:0005737">
    <property type="term" value="C:cytoplasm"/>
    <property type="evidence" value="ECO:0007669"/>
    <property type="project" value="UniProtKB-SubCell"/>
</dbReference>
<dbReference type="GO" id="GO:0005524">
    <property type="term" value="F:ATP binding"/>
    <property type="evidence" value="ECO:0007669"/>
    <property type="project" value="UniProtKB-UniRule"/>
</dbReference>
<dbReference type="GO" id="GO:0140662">
    <property type="term" value="F:ATP-dependent protein folding chaperone"/>
    <property type="evidence" value="ECO:0007669"/>
    <property type="project" value="InterPro"/>
</dbReference>
<dbReference type="GO" id="GO:0016853">
    <property type="term" value="F:isomerase activity"/>
    <property type="evidence" value="ECO:0007669"/>
    <property type="project" value="UniProtKB-KW"/>
</dbReference>
<dbReference type="GO" id="GO:0051082">
    <property type="term" value="F:unfolded protein binding"/>
    <property type="evidence" value="ECO:0007669"/>
    <property type="project" value="UniProtKB-UniRule"/>
</dbReference>
<dbReference type="GO" id="GO:0042026">
    <property type="term" value="P:protein refolding"/>
    <property type="evidence" value="ECO:0007669"/>
    <property type="project" value="UniProtKB-UniRule"/>
</dbReference>
<dbReference type="CDD" id="cd03344">
    <property type="entry name" value="GroEL"/>
    <property type="match status" value="1"/>
</dbReference>
<dbReference type="FunFam" id="1.10.560.10:FF:000001">
    <property type="entry name" value="60 kDa chaperonin"/>
    <property type="match status" value="1"/>
</dbReference>
<dbReference type="FunFam" id="3.50.7.10:FF:000001">
    <property type="entry name" value="60 kDa chaperonin"/>
    <property type="match status" value="1"/>
</dbReference>
<dbReference type="Gene3D" id="3.50.7.10">
    <property type="entry name" value="GroEL"/>
    <property type="match status" value="1"/>
</dbReference>
<dbReference type="Gene3D" id="1.10.560.10">
    <property type="entry name" value="GroEL-like equatorial domain"/>
    <property type="match status" value="1"/>
</dbReference>
<dbReference type="Gene3D" id="3.30.260.10">
    <property type="entry name" value="TCP-1-like chaperonin intermediate domain"/>
    <property type="match status" value="1"/>
</dbReference>
<dbReference type="HAMAP" id="MF_00600">
    <property type="entry name" value="CH60"/>
    <property type="match status" value="1"/>
</dbReference>
<dbReference type="InterPro" id="IPR018370">
    <property type="entry name" value="Chaperonin_Cpn60_CS"/>
</dbReference>
<dbReference type="InterPro" id="IPR001844">
    <property type="entry name" value="Cpn60/GroEL"/>
</dbReference>
<dbReference type="InterPro" id="IPR002423">
    <property type="entry name" value="Cpn60/GroEL/TCP-1"/>
</dbReference>
<dbReference type="InterPro" id="IPR027409">
    <property type="entry name" value="GroEL-like_apical_dom_sf"/>
</dbReference>
<dbReference type="InterPro" id="IPR027413">
    <property type="entry name" value="GROEL-like_equatorial_sf"/>
</dbReference>
<dbReference type="InterPro" id="IPR027410">
    <property type="entry name" value="TCP-1-like_intermed_sf"/>
</dbReference>
<dbReference type="NCBIfam" id="TIGR02348">
    <property type="entry name" value="GroEL"/>
    <property type="match status" value="1"/>
</dbReference>
<dbReference type="NCBIfam" id="NF000592">
    <property type="entry name" value="PRK00013.1"/>
    <property type="match status" value="1"/>
</dbReference>
<dbReference type="NCBIfam" id="NF009487">
    <property type="entry name" value="PRK12849.1"/>
    <property type="match status" value="1"/>
</dbReference>
<dbReference type="NCBIfam" id="NF009488">
    <property type="entry name" value="PRK12850.1"/>
    <property type="match status" value="1"/>
</dbReference>
<dbReference type="NCBIfam" id="NF009489">
    <property type="entry name" value="PRK12851.1"/>
    <property type="match status" value="1"/>
</dbReference>
<dbReference type="PANTHER" id="PTHR45633">
    <property type="entry name" value="60 KDA HEAT SHOCK PROTEIN, MITOCHONDRIAL"/>
    <property type="match status" value="1"/>
</dbReference>
<dbReference type="Pfam" id="PF00118">
    <property type="entry name" value="Cpn60_TCP1"/>
    <property type="match status" value="1"/>
</dbReference>
<dbReference type="PRINTS" id="PR00298">
    <property type="entry name" value="CHAPERONIN60"/>
</dbReference>
<dbReference type="SUPFAM" id="SSF52029">
    <property type="entry name" value="GroEL apical domain-like"/>
    <property type="match status" value="1"/>
</dbReference>
<dbReference type="SUPFAM" id="SSF48592">
    <property type="entry name" value="GroEL equatorial domain-like"/>
    <property type="match status" value="1"/>
</dbReference>
<dbReference type="SUPFAM" id="SSF54849">
    <property type="entry name" value="GroEL-intermediate domain like"/>
    <property type="match status" value="1"/>
</dbReference>
<dbReference type="PROSITE" id="PS00296">
    <property type="entry name" value="CHAPERONINS_CPN60"/>
    <property type="match status" value="1"/>
</dbReference>
<gene>
    <name evidence="1" type="primary">groEL</name>
    <name evidence="1" type="synonym">groL</name>
    <name type="ordered locus">Mpop_5325</name>
</gene>
<feature type="chain" id="PRO_1000130037" description="Chaperonin GroEL">
    <location>
        <begin position="1"/>
        <end position="546"/>
    </location>
</feature>
<feature type="region of interest" description="Disordered" evidence="2">
    <location>
        <begin position="527"/>
        <end position="546"/>
    </location>
</feature>
<feature type="compositionally biased region" description="Gly residues" evidence="2">
    <location>
        <begin position="537"/>
        <end position="546"/>
    </location>
</feature>
<feature type="binding site" evidence="1">
    <location>
        <begin position="30"/>
        <end position="33"/>
    </location>
    <ligand>
        <name>ATP</name>
        <dbReference type="ChEBI" id="CHEBI:30616"/>
    </ligand>
</feature>
<feature type="binding site" evidence="1">
    <location>
        <position position="51"/>
    </location>
    <ligand>
        <name>ATP</name>
        <dbReference type="ChEBI" id="CHEBI:30616"/>
    </ligand>
</feature>
<feature type="binding site" evidence="1">
    <location>
        <begin position="87"/>
        <end position="91"/>
    </location>
    <ligand>
        <name>ATP</name>
        <dbReference type="ChEBI" id="CHEBI:30616"/>
    </ligand>
</feature>
<feature type="binding site" evidence="1">
    <location>
        <position position="415"/>
    </location>
    <ligand>
        <name>ATP</name>
        <dbReference type="ChEBI" id="CHEBI:30616"/>
    </ligand>
</feature>
<feature type="binding site" evidence="1">
    <location>
        <position position="497"/>
    </location>
    <ligand>
        <name>ATP</name>
        <dbReference type="ChEBI" id="CHEBI:30616"/>
    </ligand>
</feature>
<comment type="function">
    <text evidence="1">Together with its co-chaperonin GroES, plays an essential role in assisting protein folding. The GroEL-GroES system forms a nano-cage that allows encapsulation of the non-native substrate proteins and provides a physical environment optimized to promote and accelerate protein folding.</text>
</comment>
<comment type="catalytic activity">
    <reaction evidence="1">
        <text>ATP + H2O + a folded polypeptide = ADP + phosphate + an unfolded polypeptide.</text>
        <dbReference type="EC" id="5.6.1.7"/>
    </reaction>
</comment>
<comment type="subunit">
    <text evidence="1">Forms a cylinder of 14 subunits composed of two heptameric rings stacked back-to-back. Interacts with the co-chaperonin GroES.</text>
</comment>
<comment type="subcellular location">
    <subcellularLocation>
        <location evidence="1">Cytoplasm</location>
    </subcellularLocation>
</comment>
<comment type="similarity">
    <text evidence="1">Belongs to the chaperonin (HSP60) family.</text>
</comment>
<organism>
    <name type="scientific">Methylorubrum populi (strain ATCC BAA-705 / NCIMB 13946 / BJ001)</name>
    <name type="common">Methylobacterium populi</name>
    <dbReference type="NCBI Taxonomy" id="441620"/>
    <lineage>
        <taxon>Bacteria</taxon>
        <taxon>Pseudomonadati</taxon>
        <taxon>Pseudomonadota</taxon>
        <taxon>Alphaproteobacteria</taxon>
        <taxon>Hyphomicrobiales</taxon>
        <taxon>Methylobacteriaceae</taxon>
        <taxon>Methylorubrum</taxon>
    </lineage>
</organism>
<reference key="1">
    <citation type="submission" date="2008-04" db="EMBL/GenBank/DDBJ databases">
        <title>Complete sequence of chromosome of Methylobacterium populi BJ001.</title>
        <authorList>
            <consortium name="US DOE Joint Genome Institute"/>
            <person name="Copeland A."/>
            <person name="Lucas S."/>
            <person name="Lapidus A."/>
            <person name="Glavina del Rio T."/>
            <person name="Dalin E."/>
            <person name="Tice H."/>
            <person name="Bruce D."/>
            <person name="Goodwin L."/>
            <person name="Pitluck S."/>
            <person name="Chertkov O."/>
            <person name="Brettin T."/>
            <person name="Detter J.C."/>
            <person name="Han C."/>
            <person name="Kuske C.R."/>
            <person name="Schmutz J."/>
            <person name="Larimer F."/>
            <person name="Land M."/>
            <person name="Hauser L."/>
            <person name="Kyrpides N."/>
            <person name="Mikhailova N."/>
            <person name="Marx C."/>
            <person name="Richardson P."/>
        </authorList>
    </citation>
    <scope>NUCLEOTIDE SEQUENCE [LARGE SCALE GENOMIC DNA]</scope>
    <source>
        <strain>ATCC BAA-705 / NCIMB 13946 / BJ001</strain>
    </source>
</reference>
<proteinExistence type="inferred from homology"/>
<protein>
    <recommendedName>
        <fullName evidence="1">Chaperonin GroEL</fullName>
        <ecNumber evidence="1">5.6.1.7</ecNumber>
    </recommendedName>
    <alternativeName>
        <fullName evidence="1">60 kDa chaperonin</fullName>
    </alternativeName>
    <alternativeName>
        <fullName evidence="1">Chaperonin-60</fullName>
        <shortName evidence="1">Cpn60</shortName>
    </alternativeName>
</protein>
<evidence type="ECO:0000255" key="1">
    <source>
        <dbReference type="HAMAP-Rule" id="MF_00600"/>
    </source>
</evidence>
<evidence type="ECO:0000256" key="2">
    <source>
        <dbReference type="SAM" id="MobiDB-lite"/>
    </source>
</evidence>
<keyword id="KW-0067">ATP-binding</keyword>
<keyword id="KW-0143">Chaperone</keyword>
<keyword id="KW-0963">Cytoplasm</keyword>
<keyword id="KW-0413">Isomerase</keyword>
<keyword id="KW-0547">Nucleotide-binding</keyword>
<sequence>MAAKDVRFSADARDKMLRGVDILADAVKVTLGPKGRNVVIEKSFGAPRITKDGVTVAKEIELADKFENMGAQMVREVASKTNDIAGDGTTTATVLAQAIVREGAKFVAAGINPMDLKRGIDLATQAAVKDITARAKKVASSEEVAQVGTISANGDKEIGEMIAHAMQKVGNEGVITVEEAKTAETELDVVEGMQFDRGYLSPYFVTNAEKMVAELEDPYILIHEKKLSSLQPMLPVLEAVVQTGKPLLIIAEDIEGEALATLVVNKLRGGLKVAAVKAPGFGDRRKAMLEDIAILTKGQTISEDLGIKLENVALPMLGRAKRVRIEKENTTIIDGLGEKADIEARVGQIKAQIEETTSDYDREKLQERLAKLAGGVAVIRVGGATEVEVKEKKDRVDDALNATRAAVEEGIVPGGGTALLRAKKAVAELKSDVPDVQAGIKIVLKALEAPIRQIAQNAGVEGSIVVGKITDNTGSETYGFNAQTEEYVDMIQSGIVDPAKVVRTALQDAASVAGLLVTTEAMVADAPKKDSPAPAMPGGGMGGMDF</sequence>
<accession>B1ZAU5</accession>
<name>CH60_METPB</name>